<sequence length="101" mass="11707">MQFKVYTYKRESRYRLFVDVQSDIIDTPGRRMVIPLASARLLSDKVSRELYPVVHIGDESWRMMTTDMASVPVSVIGEEVADLSHRENDIKNAINLMFWGI</sequence>
<organism>
    <name type="scientific">Escherichia coli (strain K12)</name>
    <dbReference type="NCBI Taxonomy" id="83333"/>
    <lineage>
        <taxon>Bacteria</taxon>
        <taxon>Pseudomonadati</taxon>
        <taxon>Pseudomonadota</taxon>
        <taxon>Gammaproteobacteria</taxon>
        <taxon>Enterobacterales</taxon>
        <taxon>Enterobacteriaceae</taxon>
        <taxon>Escherichia</taxon>
    </lineage>
</organism>
<reference key="1">
    <citation type="journal article" date="1984" name="J. Mol. Biol.">
        <title>Control of cell division by sex factor F in Escherichia coli. I. The 42.84-43.6 F segment couples cell division of the host bacteria with replication of plasmid DNA.</title>
        <authorList>
            <person name="Miki T."/>
            <person name="Yoshioka K."/>
            <person name="Horiuchi T."/>
        </authorList>
    </citation>
    <scope>NUCLEOTIDE SEQUENCE [GENOMIC DNA]</scope>
    <scope>ROLE IN CELL DEATH</scope>
</reference>
<reference key="2">
    <citation type="submission" date="1986-08" db="EMBL/GenBank/DDBJ databases">
        <title>F plasmid DNA complete mini-F region (F coordinates 40.301F to 49.869F).</title>
        <authorList>
            <person name="Eichenlaub R."/>
        </authorList>
    </citation>
    <scope>NUCLEOTIDE SEQUENCE [GENOMIC DNA]</scope>
</reference>
<reference key="3">
    <citation type="submission" date="2000-04" db="EMBL/GenBank/DDBJ databases">
        <title>Complete nucleotide sequence of the F plasmid: its implications for organization and diversification of plasmid genomes.</title>
        <authorList>
            <person name="Shimizu H."/>
            <person name="Saitoh Y."/>
            <person name="Suda Y."/>
            <person name="Uehara K."/>
            <person name="Sampei G."/>
            <person name="Mizobuchi K."/>
        </authorList>
    </citation>
    <scope>NUCLEOTIDE SEQUENCE [LARGE SCALE GENOMIC DNA]</scope>
    <source>
        <strain>K12 / CR63</strain>
    </source>
</reference>
<reference key="4">
    <citation type="journal article" date="1989" name="J. Bacteriol.">
        <title>Control of the ccd operon in plasmid F.</title>
        <authorList>
            <person name="Tam J.E."/>
            <person name="Kline B.C."/>
        </authorList>
    </citation>
    <scope>PROTEIN SEQUENCE OF 1-15</scope>
    <scope>FUNCTION IN TRANSCRIPTIONAL REGULATION</scope>
    <scope>DNA-BINDING</scope>
    <scope>SUBUNIT</scope>
</reference>
<reference key="5">
    <citation type="journal article" date="1983" name="EMBO J.">
        <title>Ham22, a mini-F mutation which is lethal to host cell and promotes recA-dependent induction of lambdoid prophage.</title>
        <authorList>
            <person name="Karoui H."/>
            <person name="Bex F."/>
            <person name="Dreze P."/>
            <person name="Couturier M."/>
        </authorList>
    </citation>
    <scope>DISRUPTION PHENOTYPE</scope>
</reference>
<reference key="6">
    <citation type="journal article" date="1983" name="Proc. Natl. Acad. Sci. U.S.A.">
        <title>Mini-F plasmid genes that couple host cell division to plasmid proliferation.</title>
        <authorList>
            <person name="Ogura T."/>
            <person name="Hiraga S."/>
        </authorList>
    </citation>
    <scope>ROLE IN PLASMID MAINTENANCE</scope>
    <scope>DISRUPTION PHENOTYPE</scope>
</reference>
<reference key="7">
    <citation type="journal article" date="1989" name="Mol. Gen. Genet.">
        <title>The F plasmid ccd autorepressor is a complex of CcdA and CcdB proteins.</title>
        <authorList>
            <person name="Tam J.E."/>
            <person name="Kline B.C."/>
        </authorList>
    </citation>
    <scope>FUNCTION IN TRANSCRIPTIONAL REGULATION</scope>
    <scope>DNA-BINDING</scope>
    <scope>SUBUNIT</scope>
</reference>
<reference key="8">
    <citation type="journal article" date="1992" name="J. Mol. Biol.">
        <title>Cell killing by the F plasmid CcdB protein involves poisoning of DNA-topoisomerase II complexes.</title>
        <authorList>
            <person name="Bernard P."/>
            <person name="Couturier M."/>
        </authorList>
    </citation>
    <scope>FUNCTION AS A TOXIN</scope>
    <scope>FUNCTION IN DNA BREAKAGE</scope>
    <scope>INHIBITION BY CCDA</scope>
</reference>
<reference key="9">
    <citation type="journal article" date="1993" name="J. Mol. Biol.">
        <title>The F plasmid CcdB protein induces efficient ATP-dependent DNA cleavage by gyrase.</title>
        <authorList>
            <person name="Bernard P."/>
            <person name="Kezdy K.E."/>
            <person name="Van Melderen L."/>
            <person name="Steyaert J."/>
            <person name="Wyns L."/>
            <person name="Pato M.L."/>
            <person name="Higgins P.N."/>
            <person name="Couturier M."/>
        </authorList>
    </citation>
    <scope>CHARACTERIZATION OF REJUVENATION ACTIVITY</scope>
    <scope>ATP REQUIRED FOR DNA BREAKAGE</scope>
</reference>
<reference key="10">
    <citation type="journal article" date="1994" name="Mol. Microbiol.">
        <title>Lon-dependent proteolysis of CcdA is the key control for activation of CcdB in plasmid-free segregant bacteria.</title>
        <authorList>
            <person name="Van Melderen L."/>
            <person name="Bernard P."/>
            <person name="Couturier M."/>
        </authorList>
    </citation>
    <scope>HALF-LIFE</scope>
</reference>
<reference key="11">
    <citation type="journal article" date="1995" name="Mol. Microbiol.">
        <title>F plasmid CcdB killer protein: ccdB gene mutants coding for non-cytotoxic proteins which retain their regulatory functions.</title>
        <authorList>
            <person name="Bahassi E.M."/>
            <person name="Salmon M.A."/>
            <person name="Van Melderen L."/>
            <person name="Bernard P."/>
            <person name="Couturier M."/>
        </authorList>
    </citation>
    <scope>MUTAGENESIS OF GLN-21; TRP-61; TRP-99; GLY-100 AND ILE-101</scope>
</reference>
<reference key="12">
    <citation type="journal article" date="1996" name="J. Mol. Biol.">
        <title>Partner switching mechanisms in inactivation and rejuvenation of Escherichia coli DNA gyrase by F plasmid proteins LetD (CcdB) and LetA (CcdA).</title>
        <authorList>
            <person name="Maki S."/>
            <person name="Takiguchi S."/>
            <person name="Horiuchi T."/>
            <person name="Sekimizu K."/>
            <person name="Miki T."/>
        </authorList>
    </citation>
    <scope>FUNCTION AS A TOXIN</scope>
    <scope>FUNCTION IN DNA BREAKAGE</scope>
    <scope>REJUVENATION</scope>
    <scope>SUBUNIT</scope>
</reference>
<reference key="13">
    <citation type="journal article" date="2001" name="Mol. Microbiol.">
        <title>The ratio between CcdA and CcdB modulates the transcriptional repression of the ccd poison-antidote system.</title>
        <authorList>
            <person name="Afif H."/>
            <person name="Allali N."/>
            <person name="Couturier M."/>
            <person name="Van Melderen L."/>
        </authorList>
    </citation>
    <scope>MODE OF TRANSCRIPTIONAL REGULATION</scope>
</reference>
<reference key="14">
    <citation type="journal article" date="1999" name="J. Mol. Biol.">
        <title>Crystal structure of CcdB, a topoisomerase poison from E. coli.</title>
        <authorList>
            <person name="Loris R."/>
            <person name="Dao-Thi M.-H."/>
            <person name="Bahassi E.M."/>
            <person name="van Melderen L."/>
            <person name="Poortmans F."/>
            <person name="Liddington R."/>
            <person name="Couturier M."/>
            <person name="Wyns L."/>
        </authorList>
    </citation>
    <scope>X-RAY CRYSTALLOGRAPHY (1.4 ANGSTROMS)</scope>
    <scope>SUBUNIT</scope>
</reference>
<reference key="15">
    <citation type="journal article" date="2005" name="J. Mol. Biol.">
        <title>Molecular basis of gyrase poisoning by the addiction toxin CcdB.</title>
        <authorList>
            <person name="Dao-Thi M.H."/>
            <person name="Van Melderen L."/>
            <person name="De Genst E."/>
            <person name="Afif H."/>
            <person name="Buts L."/>
            <person name="Wyns L."/>
            <person name="Loris R."/>
        </authorList>
    </citation>
    <scope>X-RAY CRYSTALLOGRAPHY (2.8 ANGSTROMS) IN COMPLEX WITH GYRA</scope>
</reference>
<reference key="16">
    <citation type="journal article" date="2009" name="Mol. Cell">
        <title>Rejuvenation of CcdB-poisoned gyrase by an intrinsically disordered protein domain.</title>
        <authorList>
            <person name="De Jonge N."/>
            <person name="Garcia-Pino A."/>
            <person name="Buts L."/>
            <person name="Haesaerts S."/>
            <person name="Charlier D."/>
            <person name="Zangger K."/>
            <person name="Wyns L."/>
            <person name="De Greve H."/>
            <person name="Loris R."/>
        </authorList>
    </citation>
    <scope>X-RAY CRYSTALLOGRAPHY (1.45 ANGSTROMS)</scope>
    <scope>SUBUNIT</scope>
</reference>
<evidence type="ECO:0000269" key="1">
    <source>
    </source>
</evidence>
<evidence type="ECO:0000269" key="2">
    <source>
    </source>
</evidence>
<evidence type="ECO:0000269" key="3">
    <source>
    </source>
</evidence>
<evidence type="ECO:0000269" key="4">
    <source>
    </source>
</evidence>
<evidence type="ECO:0000269" key="5">
    <source>
    </source>
</evidence>
<evidence type="ECO:0000269" key="6">
    <source>
    </source>
</evidence>
<evidence type="ECO:0000269" key="7">
    <source>
    </source>
</evidence>
<evidence type="ECO:0000269" key="8">
    <source>
    </source>
</evidence>
<evidence type="ECO:0000269" key="9">
    <source>
    </source>
</evidence>
<evidence type="ECO:0000269" key="10">
    <source>
    </source>
</evidence>
<evidence type="ECO:0000269" key="11">
    <source>
    </source>
</evidence>
<evidence type="ECO:0000305" key="12"/>
<evidence type="ECO:0007829" key="13">
    <source>
        <dbReference type="PDB" id="3VUB"/>
    </source>
</evidence>
<evidence type="ECO:0007829" key="14">
    <source>
        <dbReference type="PDB" id="4VUB"/>
    </source>
</evidence>
<evidence type="ECO:0007829" key="15">
    <source>
        <dbReference type="PDB" id="7EPJ"/>
    </source>
</evidence>
<accession>P62554</accession>
<accession>P05703</accession>
<gene>
    <name type="primary">ccdB</name>
    <name type="synonym">G</name>
    <name type="synonym">letB</name>
    <name type="synonym">letD</name>
    <name type="ordered locus">ECOK12F043</name>
</gene>
<comment type="function">
    <text evidence="1 4 5 7 8 10">Toxic component of a type II toxin-antitoxin (TA) system, functioning in plasmid maintainence. Responsible for the post-segregational killing (PSK) of plasmid-free cells, also referred to as a plasmid addiction system. Half-life of over 2 hours. Cell killing by CcdB is accompanied by filamentation, defects in chromosome and plasmid segregation, defects in cell division, formation of anucleate cells, decreased DNA synthesis and plasmid loss. Interferes with the activity of DNA gyrase, inducing it to form a covalent GyrA-DNA complex that cannot be resolved, thus promoting breakage of plasmid and chromosomal DNA. DNA breakage requires hydrolyzable ATP. Toxicity is inhibited by labile antitoxin CcdA, which blocks the activity of CcdB; CcdA also removes bound CcdB protein from the CcdB-GyrA complex by forming a CcdA-CcdB complex, a process termed rejuvenation. Also acts to inhibit partitioning of the chromosomal DNA. Functions as a transcriptional corepressor for the ccdAB operon, repression also requires CcdA.</text>
</comment>
<comment type="subunit">
    <text evidence="2 3 4 5 10 11">Homodimer. Forms a complex with GyrA, probably a tetramer GyrA(2)CcdB(2), in which GyrA is inactive. Forms a complex with antitoxin CcdA; there are both high- and low-affinity binding sites for CcdA such that both CcdA-CcdB(2) and CcdA(2)CcdB(2) complexes can form. The CcdA-CcdB(2) trimer is sufficient for rejuvenation, whereas maximal operon repression occurs with CcdA(2)CcdB(2). When the CcdA:CcdB ratio is lower than 1, a CcdA(2)-CcdB(4) complex is formed which is devoid of repression activity. In this case repression is alleviated and both proteins are produced.</text>
</comment>
<comment type="interaction">
    <interactant intactId="EBI-25647730">
        <id>P62554</id>
    </interactant>
    <interactant intactId="EBI-25647704">
        <id>P62552</id>
        <label>ccdA</label>
    </interactant>
    <organismsDiffer>false</organismsDiffer>
    <experiments>6</experiments>
</comment>
<comment type="interaction">
    <interactant intactId="EBI-25647730">
        <id>P62554</id>
    </interactant>
    <interactant intactId="EBI-547129">
        <id>P0AES4</id>
        <label>gyrA</label>
    </interactant>
    <organismsDiffer>false</organismsDiffer>
    <experiments>3</experiments>
</comment>
<comment type="disruption phenotype">
    <text evidence="6 7">Disruption of both ccdA and ccdB has no phenotype, except for increased plasmid loss.</text>
</comment>
<comment type="similarity">
    <text evidence="12">Belongs to the CcdB toxin family.</text>
</comment>
<keyword id="KW-0002">3D-structure</keyword>
<keyword id="KW-0903">Direct protein sequencing</keyword>
<keyword id="KW-0614">Plasmid</keyword>
<keyword id="KW-0678">Repressor</keyword>
<keyword id="KW-1277">Toxin-antitoxin system</keyword>
<keyword id="KW-0804">Transcription</keyword>
<keyword id="KW-0805">Transcription regulation</keyword>
<protein>
    <recommendedName>
        <fullName>Toxin CcdB</fullName>
    </recommendedName>
    <alternativeName>
        <fullName>Cytotoxic protein CcdB</fullName>
    </alternativeName>
    <alternativeName>
        <fullName>LynB</fullName>
    </alternativeName>
    <alternativeName>
        <fullName>Protein G</fullName>
    </alternativeName>
    <alternativeName>
        <fullName>Protein LetD</fullName>
    </alternativeName>
</protein>
<proteinExistence type="evidence at protein level"/>
<name>CCDB_ECOLI</name>
<geneLocation type="plasmid">
    <name>F</name>
</geneLocation>
<dbReference type="EMBL" id="X00594">
    <property type="protein sequence ID" value="CAA25244.1"/>
    <property type="molecule type" value="Genomic_DNA"/>
</dbReference>
<dbReference type="EMBL" id="M12987">
    <property type="protein sequence ID" value="AAA24899.1"/>
    <property type="molecule type" value="Genomic_DNA"/>
</dbReference>
<dbReference type="EMBL" id="AP001918">
    <property type="protein sequence ID" value="BAA97913.1"/>
    <property type="molecule type" value="Genomic_DNA"/>
</dbReference>
<dbReference type="PIR" id="T00238">
    <property type="entry name" value="T00238"/>
</dbReference>
<dbReference type="RefSeq" id="NP_061422.1">
    <property type="nucleotide sequence ID" value="NC_002483.1"/>
</dbReference>
<dbReference type="RefSeq" id="WP_001159868.1">
    <property type="nucleotide sequence ID" value="NZ_STEB01000056.1"/>
</dbReference>
<dbReference type="RefSeq" id="YP_003108267.1">
    <property type="nucleotide sequence ID" value="NC_013122.1"/>
</dbReference>
<dbReference type="PDB" id="1VUB">
    <property type="method" value="X-ray"/>
    <property type="resolution" value="2.60 A"/>
    <property type="chains" value="A/B/C/D=1-101"/>
</dbReference>
<dbReference type="PDB" id="1X75">
    <property type="method" value="X-ray"/>
    <property type="resolution" value="2.80 A"/>
    <property type="chains" value="C/D=1-101"/>
</dbReference>
<dbReference type="PDB" id="2VUB">
    <property type="method" value="X-ray"/>
    <property type="resolution" value="2.45 A"/>
    <property type="chains" value="A/B/C/D/E/F/G/H=1-101"/>
</dbReference>
<dbReference type="PDB" id="3G7Z">
    <property type="method" value="X-ray"/>
    <property type="resolution" value="2.35 A"/>
    <property type="chains" value="A/B=1-101"/>
</dbReference>
<dbReference type="PDB" id="3HPW">
    <property type="method" value="X-ray"/>
    <property type="resolution" value="1.45 A"/>
    <property type="chains" value="A/B=1-101"/>
</dbReference>
<dbReference type="PDB" id="3VUB">
    <property type="method" value="X-ray"/>
    <property type="resolution" value="1.40 A"/>
    <property type="chains" value="A=1-101"/>
</dbReference>
<dbReference type="PDB" id="4VUB">
    <property type="method" value="X-ray"/>
    <property type="resolution" value="1.45 A"/>
    <property type="chains" value="A=1-101"/>
</dbReference>
<dbReference type="PDB" id="7EPG">
    <property type="method" value="X-ray"/>
    <property type="resolution" value="1.63 A"/>
    <property type="chains" value="A=1-101"/>
</dbReference>
<dbReference type="PDB" id="7EPI">
    <property type="method" value="X-ray"/>
    <property type="resolution" value="1.93 A"/>
    <property type="chains" value="A=1-101"/>
</dbReference>
<dbReference type="PDB" id="7EPJ">
    <property type="method" value="X-ray"/>
    <property type="resolution" value="1.35 A"/>
    <property type="chains" value="A=1-101"/>
</dbReference>
<dbReference type="PDBsum" id="1VUB"/>
<dbReference type="PDBsum" id="1X75"/>
<dbReference type="PDBsum" id="2VUB"/>
<dbReference type="PDBsum" id="3G7Z"/>
<dbReference type="PDBsum" id="3HPW"/>
<dbReference type="PDBsum" id="3VUB"/>
<dbReference type="PDBsum" id="4VUB"/>
<dbReference type="PDBsum" id="7EPG"/>
<dbReference type="PDBsum" id="7EPI"/>
<dbReference type="PDBsum" id="7EPJ"/>
<dbReference type="EMDB" id="EMD-3568"/>
<dbReference type="EMDB" id="EMD-3569"/>
<dbReference type="SASBDB" id="P62554"/>
<dbReference type="SMR" id="P62554"/>
<dbReference type="ComplexPortal" id="CPX-5906">
    <property type="entry name" value="CcdB-poisoned gyrase complex"/>
</dbReference>
<dbReference type="ComplexPortal" id="CPX-5908">
    <property type="entry name" value="CcdAB toxin-antitoxin complex"/>
</dbReference>
<dbReference type="IntAct" id="P62554">
    <property type="interactions" value="2"/>
</dbReference>
<dbReference type="KEGG" id="ecoc:C3026_24325"/>
<dbReference type="EvolutionaryTrace" id="P62554"/>
<dbReference type="PRO" id="PR:P62554"/>
<dbReference type="GO" id="GO:0110001">
    <property type="term" value="C:toxin-antitoxin complex"/>
    <property type="evidence" value="ECO:0000353"/>
    <property type="project" value="ComplexPortal"/>
</dbReference>
<dbReference type="GO" id="GO:0017053">
    <property type="term" value="C:transcription repressor complex"/>
    <property type="evidence" value="ECO:0000314"/>
    <property type="project" value="ComplexPortal"/>
</dbReference>
<dbReference type="GO" id="GO:0008657">
    <property type="term" value="F:DNA topoisomerase type II (double strand cut, ATP-hydrolyzing) inhibitor activity"/>
    <property type="evidence" value="ECO:0007669"/>
    <property type="project" value="InterPro"/>
</dbReference>
<dbReference type="GO" id="GO:2000104">
    <property type="term" value="P:negative regulation of DNA-templated DNA replication"/>
    <property type="evidence" value="ECO:0000314"/>
    <property type="project" value="ComplexPortal"/>
</dbReference>
<dbReference type="GO" id="GO:0045892">
    <property type="term" value="P:negative regulation of DNA-templated transcription"/>
    <property type="evidence" value="ECO:0000314"/>
    <property type="project" value="ComplexPortal"/>
</dbReference>
<dbReference type="GO" id="GO:0006276">
    <property type="term" value="P:plasmid maintenance"/>
    <property type="evidence" value="ECO:0007669"/>
    <property type="project" value="InterPro"/>
</dbReference>
<dbReference type="Gene3D" id="2.30.30.110">
    <property type="match status" value="1"/>
</dbReference>
<dbReference type="InterPro" id="IPR002712">
    <property type="entry name" value="CcdB"/>
</dbReference>
<dbReference type="InterPro" id="IPR011067">
    <property type="entry name" value="Plasmid_toxin/cell-grow_inhib"/>
</dbReference>
<dbReference type="NCBIfam" id="NF010262">
    <property type="entry name" value="PRK13708.1"/>
    <property type="match status" value="1"/>
</dbReference>
<dbReference type="Pfam" id="PF01845">
    <property type="entry name" value="CcdB"/>
    <property type="match status" value="1"/>
</dbReference>
<dbReference type="SUPFAM" id="SSF50118">
    <property type="entry name" value="Cell growth inhibitor/plasmid maintenance toxic component"/>
    <property type="match status" value="1"/>
</dbReference>
<feature type="chain" id="PRO_0000068386" description="Toxin CcdB">
    <location>
        <begin position="1"/>
        <end position="101"/>
    </location>
</feature>
<feature type="mutagenesis site" description="No phenotype." evidence="9">
    <original>Q</original>
    <variation>L</variation>
    <variation>S</variation>
    <variation>Y</variation>
    <location>
        <position position="21"/>
    </location>
</feature>
<feature type="mutagenesis site" description="No phenotype." evidence="9">
    <original>W</original>
    <variation>L</variation>
    <variation>Q</variation>
    <variation>S</variation>
    <variation>Y</variation>
    <location>
        <position position="61"/>
    </location>
</feature>
<feature type="mutagenesis site" description="Loss of toxicity, no decrease in protein stability. Still represses ccdAB operon, still forms complex with CcdA.">
    <location>
        <begin position="99"/>
        <end position="101"/>
    </location>
</feature>
<feature type="mutagenesis site" description="Loss of toxicity." evidence="9">
    <original>W</original>
    <variation>L</variation>
    <variation>Q</variation>
    <variation>S</variation>
    <variation>Y</variation>
    <location>
        <position position="99"/>
    </location>
</feature>
<feature type="mutagenesis site" description="Loss of toxicity, no decrease in protein stability. Still represses ccdAB operon, still forms complex with CcdA." evidence="9">
    <original>G</original>
    <variation>E</variation>
    <variation>R</variation>
    <location>
        <position position="100"/>
    </location>
</feature>
<feature type="mutagenesis site" description="Loss of toxicity." evidence="9">
    <original>I</original>
    <variation>R</variation>
    <location>
        <position position="101"/>
    </location>
</feature>
<feature type="strand" evidence="15">
    <location>
        <begin position="4"/>
        <end position="10"/>
    </location>
</feature>
<feature type="strand" evidence="15">
    <location>
        <begin position="13"/>
        <end position="19"/>
    </location>
</feature>
<feature type="strand" evidence="15">
    <location>
        <begin position="30"/>
        <end position="39"/>
    </location>
</feature>
<feature type="strand" evidence="14">
    <location>
        <begin position="40"/>
        <end position="42"/>
    </location>
</feature>
<feature type="strand" evidence="13">
    <location>
        <begin position="44"/>
        <end position="46"/>
    </location>
</feature>
<feature type="turn" evidence="15">
    <location>
        <begin position="48"/>
        <end position="50"/>
    </location>
</feature>
<feature type="strand" evidence="15">
    <location>
        <begin position="53"/>
        <end position="56"/>
    </location>
</feature>
<feature type="strand" evidence="15">
    <location>
        <begin position="59"/>
        <end position="63"/>
    </location>
</feature>
<feature type="helix" evidence="15">
    <location>
        <begin position="65"/>
        <end position="67"/>
    </location>
</feature>
<feature type="strand" evidence="15">
    <location>
        <begin position="69"/>
        <end position="72"/>
    </location>
</feature>
<feature type="helix" evidence="15">
    <location>
        <begin position="73"/>
        <end position="75"/>
    </location>
</feature>
<feature type="strand" evidence="15">
    <location>
        <begin position="76"/>
        <end position="82"/>
    </location>
</feature>
<feature type="helix" evidence="15">
    <location>
        <begin position="84"/>
        <end position="86"/>
    </location>
</feature>
<feature type="helix" evidence="15">
    <location>
        <begin position="87"/>
        <end position="99"/>
    </location>
</feature>